<keyword id="KW-0131">Cell cycle</keyword>
<keyword id="KW-0132">Cell division</keyword>
<keyword id="KW-0966">Cell projection</keyword>
<keyword id="KW-0969">Cilium</keyword>
<keyword id="KW-0963">Cytoplasm</keyword>
<keyword id="KW-0206">Cytoskeleton</keyword>
<keyword id="KW-0221">Differentiation</keyword>
<keyword id="KW-0282">Flagellum</keyword>
<keyword id="KW-0342">GTP-binding</keyword>
<keyword id="KW-0547">Nucleotide-binding</keyword>
<keyword id="KW-1185">Reference proteome</keyword>
<keyword id="KW-0744">Spermatogenesis</keyword>
<comment type="function">
    <text evidence="1 3 4 7">Filament-forming cytoskeletal GTPase (By similarity). May play a role in cytokinesis (Potential). Involved in spermatogenesis. Involved in the morphogenesis of sperm heads and the elongation of sperm tails probably implicating the association with alpha- and beta-tubulins. Forms a filamentous structure with SEPTIN7, SEPTIN6, SEPTIN2 and probably SEPTIN4 at the sperm annulus which is required for the structural integrity and motility of the sperm tail during postmeiotic differentiation (By similarity).</text>
</comment>
<comment type="subunit">
    <text evidence="1">Septins polymerize into heterooligomeric protein complexes that form filaments, and can associate with cellular membranes, actin filaments and microtubules. GTPase activity is required for filament formation. Interacts with SEPTIN6 and SEPTIN11. Component of a octameric complex consisting of SEPTIN12, SEPTIN7, SEPTIN6 and SEPTIN2 or SEPTIN4 in the order 12-7-6-2-2-6-7-12 or 12-7-6-4-4-6-7-12 and located in the sperm annulus; the octamer polymerizes into filaments via the SEPTIN12 N- and C-termini; the SEPTIN12:SEPTIN7 association is mediated by the GTP-binding domains. Interacts with SPAG4 and LMNB1. Associates with alpha- and beta-tubulins (By similarity).</text>
</comment>
<comment type="subcellular location">
    <subcellularLocation>
        <location evidence="1">Cytoplasm</location>
    </subcellularLocation>
    <subcellularLocation>
        <location evidence="1">Cytoplasm</location>
        <location evidence="1">Cytoskeleton</location>
    </subcellularLocation>
    <subcellularLocation>
        <location evidence="1">Cytoplasm</location>
        <location evidence="1">Cytoskeleton</location>
        <location evidence="1">Spindle</location>
    </subcellularLocation>
    <subcellularLocation>
        <location evidence="2 3 4">Cell projection</location>
        <location evidence="2 3 4">Cilium</location>
        <location evidence="2 3 4">Flagellum</location>
    </subcellularLocation>
    <text evidence="1 2 3">At interphase, forms a filamentous structure in the cytoplasm. During anaphase, translocates to the central spindle region and to the midbody during cytokinesis (By similarity). Found in the sperm annulus (By similarity).</text>
</comment>
<comment type="similarity">
    <text evidence="5">Belongs to the TRAFAC class TrmE-Era-EngA-EngB-Septin-like GTPase superfamily. Septin GTPase family.</text>
</comment>
<sequence length="361" mass="41210">MDPLRQSPSPSSSRASSPRTLSCERLGYVGIEAVLDQLKIKAMKMGFEFNIMVVGQSGLGKSTMVNTLFKSKIWKSTMPGLRVPMPQTLQLHYVTHVIEENGVKLKLTVTDTPGFGDQINNDKCWDPILGYINEQYERYLQEEILITRQRHIPDTRVHCCIYFVPPTGHCLRPLDLEFLQRLCRAVNVVPVIARADSLTIEEREAFRHRIQDDLKTHSIEVYPQKSFDEDVNDKILNSKIRERIPFAVVGADREHMVNGRCVLGRKTKWGIIEVENMAHCEFPLLRDLLIRSHLQDLKDITHNVHYENYRIIRLKESHALPQGPGWVNLAPAPPPAPTGTRASPGPAKMCRWAEDNSDEDF</sequence>
<evidence type="ECO:0000250" key="1"/>
<evidence type="ECO:0000250" key="2">
    <source>
        <dbReference type="UniProtKB" id="Q4V8G5"/>
    </source>
</evidence>
<evidence type="ECO:0000250" key="3">
    <source>
        <dbReference type="UniProtKB" id="Q8IYM1"/>
    </source>
</evidence>
<evidence type="ECO:0000250" key="4">
    <source>
        <dbReference type="UniProtKB" id="Q9D451"/>
    </source>
</evidence>
<evidence type="ECO:0000255" key="5">
    <source>
        <dbReference type="PROSITE-ProRule" id="PRU01056"/>
    </source>
</evidence>
<evidence type="ECO:0000256" key="6">
    <source>
        <dbReference type="SAM" id="MobiDB-lite"/>
    </source>
</evidence>
<evidence type="ECO:0000305" key="7"/>
<protein>
    <recommendedName>
        <fullName>Septin-12</fullName>
    </recommendedName>
</protein>
<reference key="1">
    <citation type="submission" date="2007-04" db="EMBL/GenBank/DDBJ databases">
        <authorList>
            <consortium name="NIH - Mammalian Gene Collection (MGC) project"/>
        </authorList>
    </citation>
    <scope>NUCLEOTIDE SEQUENCE [LARGE SCALE MRNA]</scope>
    <source>
        <strain>Crossbred X Angus</strain>
        <tissue>Liver</tissue>
    </source>
</reference>
<accession>A5D7Q3</accession>
<name>SEP12_BOVIN</name>
<organism>
    <name type="scientific">Bos taurus</name>
    <name type="common">Bovine</name>
    <dbReference type="NCBI Taxonomy" id="9913"/>
    <lineage>
        <taxon>Eukaryota</taxon>
        <taxon>Metazoa</taxon>
        <taxon>Chordata</taxon>
        <taxon>Craniata</taxon>
        <taxon>Vertebrata</taxon>
        <taxon>Euteleostomi</taxon>
        <taxon>Mammalia</taxon>
        <taxon>Eutheria</taxon>
        <taxon>Laurasiatheria</taxon>
        <taxon>Artiodactyla</taxon>
        <taxon>Ruminantia</taxon>
        <taxon>Pecora</taxon>
        <taxon>Bovidae</taxon>
        <taxon>Bovinae</taxon>
        <taxon>Bos</taxon>
    </lineage>
</organism>
<proteinExistence type="evidence at transcript level"/>
<dbReference type="EMBL" id="BC140643">
    <property type="protein sequence ID" value="AAI40644.1"/>
    <property type="molecule type" value="mRNA"/>
</dbReference>
<dbReference type="RefSeq" id="NP_001091612.1">
    <property type="nucleotide sequence ID" value="NM_001098143.2"/>
</dbReference>
<dbReference type="SMR" id="A5D7Q3"/>
<dbReference type="FunCoup" id="A5D7Q3">
    <property type="interactions" value="94"/>
</dbReference>
<dbReference type="STRING" id="9913.ENSBTAP00000021722"/>
<dbReference type="PaxDb" id="9913-ENSBTAP00000021722"/>
<dbReference type="GeneID" id="618676"/>
<dbReference type="KEGG" id="bta:618676"/>
<dbReference type="CTD" id="124404"/>
<dbReference type="eggNOG" id="KOG1547">
    <property type="taxonomic scope" value="Eukaryota"/>
</dbReference>
<dbReference type="InParanoid" id="A5D7Q3"/>
<dbReference type="Proteomes" id="UP000009136">
    <property type="component" value="Unplaced"/>
</dbReference>
<dbReference type="GO" id="GO:0032153">
    <property type="term" value="C:cell division site"/>
    <property type="evidence" value="ECO:0000318"/>
    <property type="project" value="GO_Central"/>
</dbReference>
<dbReference type="GO" id="GO:0032154">
    <property type="term" value="C:cleavage furrow"/>
    <property type="evidence" value="ECO:0000250"/>
    <property type="project" value="UniProtKB"/>
</dbReference>
<dbReference type="GO" id="GO:0015630">
    <property type="term" value="C:microtubule cytoskeleton"/>
    <property type="evidence" value="ECO:0000318"/>
    <property type="project" value="GO_Central"/>
</dbReference>
<dbReference type="GO" id="GO:0030496">
    <property type="term" value="C:midbody"/>
    <property type="evidence" value="ECO:0000250"/>
    <property type="project" value="UniProtKB"/>
</dbReference>
<dbReference type="GO" id="GO:0048471">
    <property type="term" value="C:perinuclear region of cytoplasm"/>
    <property type="evidence" value="ECO:0000250"/>
    <property type="project" value="UniProtKB"/>
</dbReference>
<dbReference type="GO" id="GO:0031105">
    <property type="term" value="C:septin complex"/>
    <property type="evidence" value="ECO:0000250"/>
    <property type="project" value="UniProtKB"/>
</dbReference>
<dbReference type="GO" id="GO:0005940">
    <property type="term" value="C:septin ring"/>
    <property type="evidence" value="ECO:0000318"/>
    <property type="project" value="GO_Central"/>
</dbReference>
<dbReference type="GO" id="GO:0097227">
    <property type="term" value="C:sperm annulus"/>
    <property type="evidence" value="ECO:0000250"/>
    <property type="project" value="UniProtKB"/>
</dbReference>
<dbReference type="GO" id="GO:0005819">
    <property type="term" value="C:spindle"/>
    <property type="evidence" value="ECO:0000250"/>
    <property type="project" value="UniProtKB"/>
</dbReference>
<dbReference type="GO" id="GO:0001725">
    <property type="term" value="C:stress fiber"/>
    <property type="evidence" value="ECO:0000250"/>
    <property type="project" value="UniProtKB"/>
</dbReference>
<dbReference type="GO" id="GO:0019003">
    <property type="term" value="F:GDP binding"/>
    <property type="evidence" value="ECO:0000250"/>
    <property type="project" value="UniProtKB"/>
</dbReference>
<dbReference type="GO" id="GO:0005525">
    <property type="term" value="F:GTP binding"/>
    <property type="evidence" value="ECO:0000250"/>
    <property type="project" value="UniProtKB"/>
</dbReference>
<dbReference type="GO" id="GO:0003924">
    <property type="term" value="F:GTPase activity"/>
    <property type="evidence" value="ECO:0000318"/>
    <property type="project" value="GO_Central"/>
</dbReference>
<dbReference type="GO" id="GO:0060090">
    <property type="term" value="F:molecular adaptor activity"/>
    <property type="evidence" value="ECO:0000318"/>
    <property type="project" value="GO_Central"/>
</dbReference>
<dbReference type="GO" id="GO:0035091">
    <property type="term" value="F:phosphatidylinositol binding"/>
    <property type="evidence" value="ECO:0000250"/>
    <property type="project" value="UniProtKB"/>
</dbReference>
<dbReference type="GO" id="GO:0030154">
    <property type="term" value="P:cell differentiation"/>
    <property type="evidence" value="ECO:0007669"/>
    <property type="project" value="UniProtKB-KW"/>
</dbReference>
<dbReference type="GO" id="GO:0061640">
    <property type="term" value="P:cytoskeleton-dependent cytokinesis"/>
    <property type="evidence" value="ECO:0000318"/>
    <property type="project" value="GO_Central"/>
</dbReference>
<dbReference type="GO" id="GO:0008104">
    <property type="term" value="P:protein localization"/>
    <property type="evidence" value="ECO:0000318"/>
    <property type="project" value="GO_Central"/>
</dbReference>
<dbReference type="GO" id="GO:0007283">
    <property type="term" value="P:spermatogenesis"/>
    <property type="evidence" value="ECO:0007669"/>
    <property type="project" value="UniProtKB-KW"/>
</dbReference>
<dbReference type="CDD" id="cd01850">
    <property type="entry name" value="CDC_Septin"/>
    <property type="match status" value="1"/>
</dbReference>
<dbReference type="FunFam" id="3.40.50.300:FF:000143">
    <property type="entry name" value="septin-9 isoform X1"/>
    <property type="match status" value="1"/>
</dbReference>
<dbReference type="Gene3D" id="3.40.50.300">
    <property type="entry name" value="P-loop containing nucleotide triphosphate hydrolases"/>
    <property type="match status" value="1"/>
</dbReference>
<dbReference type="InterPro" id="IPR030379">
    <property type="entry name" value="G_SEPTIN_dom"/>
</dbReference>
<dbReference type="InterPro" id="IPR027417">
    <property type="entry name" value="P-loop_NTPase"/>
</dbReference>
<dbReference type="InterPro" id="IPR016491">
    <property type="entry name" value="Septin"/>
</dbReference>
<dbReference type="InterPro" id="IPR008114">
    <property type="entry name" value="Septin3"/>
</dbReference>
<dbReference type="PANTHER" id="PTHR18884">
    <property type="entry name" value="SEPTIN"/>
    <property type="match status" value="1"/>
</dbReference>
<dbReference type="Pfam" id="PF00735">
    <property type="entry name" value="Septin"/>
    <property type="match status" value="1"/>
</dbReference>
<dbReference type="PIRSF" id="PIRSF006698">
    <property type="entry name" value="Septin"/>
    <property type="match status" value="1"/>
</dbReference>
<dbReference type="PRINTS" id="PR01741">
    <property type="entry name" value="SEPTIN3"/>
</dbReference>
<dbReference type="SUPFAM" id="SSF52540">
    <property type="entry name" value="P-loop containing nucleoside triphosphate hydrolases"/>
    <property type="match status" value="1"/>
</dbReference>
<dbReference type="PROSITE" id="PS51719">
    <property type="entry name" value="G_SEPTIN"/>
    <property type="match status" value="1"/>
</dbReference>
<gene>
    <name evidence="3" type="primary">SEPTIN12</name>
    <name type="synonym">SEPT12</name>
</gene>
<feature type="chain" id="PRO_0000312859" description="Septin-12">
    <location>
        <begin position="1"/>
        <end position="361"/>
    </location>
</feature>
<feature type="domain" description="Septin-type G" evidence="5">
    <location>
        <begin position="45"/>
        <end position="316"/>
    </location>
</feature>
<feature type="region of interest" description="Interaction with SEPTIN7" evidence="3">
    <location>
        <begin position="45"/>
        <end position="318"/>
    </location>
</feature>
<feature type="region of interest" description="G1 motif" evidence="5">
    <location>
        <begin position="55"/>
        <end position="62"/>
    </location>
</feature>
<feature type="region of interest" description="G3 motif" evidence="5">
    <location>
        <begin position="111"/>
        <end position="114"/>
    </location>
</feature>
<feature type="region of interest" description="G4 motif" evidence="5">
    <location>
        <begin position="193"/>
        <end position="196"/>
    </location>
</feature>
<feature type="region of interest" description="Self-association (via N-terminus) to polymerize octameric septin 12-7-6-2/4-2/4-6-7-12 filaments" evidence="3">
    <location>
        <begin position="257"/>
        <end position="361"/>
    </location>
</feature>
<feature type="region of interest" description="Disordered" evidence="6">
    <location>
        <begin position="333"/>
        <end position="361"/>
    </location>
</feature>
<feature type="compositionally biased region" description="Low complexity" evidence="6">
    <location>
        <begin position="338"/>
        <end position="347"/>
    </location>
</feature>
<feature type="binding site" evidence="1">
    <location>
        <begin position="55"/>
        <end position="62"/>
    </location>
    <ligand>
        <name>GTP</name>
        <dbReference type="ChEBI" id="CHEBI:37565"/>
    </ligand>
</feature>
<feature type="binding site" evidence="1">
    <location>
        <position position="88"/>
    </location>
    <ligand>
        <name>GTP</name>
        <dbReference type="ChEBI" id="CHEBI:37565"/>
    </ligand>
</feature>
<feature type="binding site" evidence="1">
    <location>
        <position position="114"/>
    </location>
    <ligand>
        <name>GTP</name>
        <dbReference type="ChEBI" id="CHEBI:37565"/>
    </ligand>
</feature>
<feature type="binding site" evidence="1">
    <location>
        <begin position="194"/>
        <end position="202"/>
    </location>
    <ligand>
        <name>GTP</name>
        <dbReference type="ChEBI" id="CHEBI:37565"/>
    </ligand>
</feature>
<feature type="binding site" evidence="1">
    <location>
        <position position="250"/>
    </location>
    <ligand>
        <name>GTP</name>
        <dbReference type="ChEBI" id="CHEBI:37565"/>
    </ligand>
</feature>
<feature type="binding site" evidence="1">
    <location>
        <position position="265"/>
    </location>
    <ligand>
        <name>GTP</name>
        <dbReference type="ChEBI" id="CHEBI:37565"/>
    </ligand>
</feature>